<organism>
    <name type="scientific">Sulfurihydrogenibium sp. (strain YO3AOP1)</name>
    <dbReference type="NCBI Taxonomy" id="436114"/>
    <lineage>
        <taxon>Bacteria</taxon>
        <taxon>Pseudomonadati</taxon>
        <taxon>Aquificota</taxon>
        <taxon>Aquificia</taxon>
        <taxon>Aquificales</taxon>
        <taxon>Hydrogenothermaceae</taxon>
        <taxon>Sulfurihydrogenibium</taxon>
    </lineage>
</organism>
<protein>
    <recommendedName>
        <fullName evidence="1">Small ribosomal subunit protein uS15</fullName>
    </recommendedName>
    <alternativeName>
        <fullName evidence="2">30S ribosomal protein S15</fullName>
    </alternativeName>
</protein>
<accession>B2V901</accession>
<keyword id="KW-0687">Ribonucleoprotein</keyword>
<keyword id="KW-0689">Ribosomal protein</keyword>
<keyword id="KW-0694">RNA-binding</keyword>
<keyword id="KW-0699">rRNA-binding</keyword>
<comment type="function">
    <text evidence="1">One of the primary rRNA binding proteins, it binds directly to 16S rRNA where it helps nucleate assembly of the platform of the 30S subunit by binding and bridging several RNA helices of the 16S rRNA.</text>
</comment>
<comment type="function">
    <text evidence="1">Forms an intersubunit bridge (bridge B4) with the 23S rRNA of the 50S subunit in the ribosome.</text>
</comment>
<comment type="subunit">
    <text evidence="1">Part of the 30S ribosomal subunit. Forms a bridge to the 50S subunit in the 70S ribosome, contacting the 23S rRNA.</text>
</comment>
<comment type="similarity">
    <text evidence="1">Belongs to the universal ribosomal protein uS15 family.</text>
</comment>
<gene>
    <name evidence="1" type="primary">rpsO</name>
    <name type="ordered locus">SYO3AOP1_0791</name>
</gene>
<reference key="1">
    <citation type="journal article" date="2009" name="J. Bacteriol.">
        <title>Complete and draft genome sequences of six members of the Aquificales.</title>
        <authorList>
            <person name="Reysenbach A.-L."/>
            <person name="Hamamura N."/>
            <person name="Podar M."/>
            <person name="Griffiths E."/>
            <person name="Ferreira S."/>
            <person name="Hochstein R."/>
            <person name="Heidelberg J."/>
            <person name="Johnson J."/>
            <person name="Mead D."/>
            <person name="Pohorille A."/>
            <person name="Sarmiento M."/>
            <person name="Schweighofer K."/>
            <person name="Seshadri R."/>
            <person name="Voytek M.A."/>
        </authorList>
    </citation>
    <scope>NUCLEOTIDE SEQUENCE [LARGE SCALE GENOMIC DNA]</scope>
    <source>
        <strain>YO3AOP1</strain>
    </source>
</reference>
<proteinExistence type="inferred from homology"/>
<sequence>MSITAEKKQELIKKFALHENDTGSPEVQIAVLTERIRNLTEHIKANKKDLHSRRGLIGMVNKRRKLLNYLKRESEERYRKIIEALNIRETSNESK</sequence>
<name>RS15_SULSY</name>
<evidence type="ECO:0000255" key="1">
    <source>
        <dbReference type="HAMAP-Rule" id="MF_01343"/>
    </source>
</evidence>
<evidence type="ECO:0000305" key="2"/>
<dbReference type="EMBL" id="CP001080">
    <property type="protein sequence ID" value="ACD66424.1"/>
    <property type="molecule type" value="Genomic_DNA"/>
</dbReference>
<dbReference type="RefSeq" id="WP_012459501.1">
    <property type="nucleotide sequence ID" value="NC_010730.1"/>
</dbReference>
<dbReference type="SMR" id="B2V901"/>
<dbReference type="STRING" id="436114.SYO3AOP1_0791"/>
<dbReference type="KEGG" id="sul:SYO3AOP1_0791"/>
<dbReference type="eggNOG" id="COG0184">
    <property type="taxonomic scope" value="Bacteria"/>
</dbReference>
<dbReference type="HOGENOM" id="CLU_148518_0_0_0"/>
<dbReference type="GO" id="GO:0022627">
    <property type="term" value="C:cytosolic small ribosomal subunit"/>
    <property type="evidence" value="ECO:0007669"/>
    <property type="project" value="TreeGrafter"/>
</dbReference>
<dbReference type="GO" id="GO:0019843">
    <property type="term" value="F:rRNA binding"/>
    <property type="evidence" value="ECO:0007669"/>
    <property type="project" value="UniProtKB-UniRule"/>
</dbReference>
<dbReference type="GO" id="GO:0003735">
    <property type="term" value="F:structural constituent of ribosome"/>
    <property type="evidence" value="ECO:0007669"/>
    <property type="project" value="InterPro"/>
</dbReference>
<dbReference type="GO" id="GO:0006412">
    <property type="term" value="P:translation"/>
    <property type="evidence" value="ECO:0007669"/>
    <property type="project" value="UniProtKB-UniRule"/>
</dbReference>
<dbReference type="CDD" id="cd00353">
    <property type="entry name" value="Ribosomal_S15p_S13e"/>
    <property type="match status" value="1"/>
</dbReference>
<dbReference type="FunFam" id="1.10.287.10:FF:000002">
    <property type="entry name" value="30S ribosomal protein S15"/>
    <property type="match status" value="1"/>
</dbReference>
<dbReference type="Gene3D" id="6.10.250.3130">
    <property type="match status" value="1"/>
</dbReference>
<dbReference type="Gene3D" id="1.10.287.10">
    <property type="entry name" value="S15/NS1, RNA-binding"/>
    <property type="match status" value="1"/>
</dbReference>
<dbReference type="HAMAP" id="MF_01343_B">
    <property type="entry name" value="Ribosomal_uS15_B"/>
    <property type="match status" value="1"/>
</dbReference>
<dbReference type="InterPro" id="IPR000589">
    <property type="entry name" value="Ribosomal_uS15"/>
</dbReference>
<dbReference type="InterPro" id="IPR005290">
    <property type="entry name" value="Ribosomal_uS15_bac-type"/>
</dbReference>
<dbReference type="InterPro" id="IPR009068">
    <property type="entry name" value="uS15_NS1_RNA-bd_sf"/>
</dbReference>
<dbReference type="NCBIfam" id="TIGR00952">
    <property type="entry name" value="S15_bact"/>
    <property type="match status" value="1"/>
</dbReference>
<dbReference type="PANTHER" id="PTHR23321">
    <property type="entry name" value="RIBOSOMAL PROTEIN S15, BACTERIAL AND ORGANELLAR"/>
    <property type="match status" value="1"/>
</dbReference>
<dbReference type="PANTHER" id="PTHR23321:SF26">
    <property type="entry name" value="SMALL RIBOSOMAL SUBUNIT PROTEIN US15M"/>
    <property type="match status" value="1"/>
</dbReference>
<dbReference type="Pfam" id="PF00312">
    <property type="entry name" value="Ribosomal_S15"/>
    <property type="match status" value="1"/>
</dbReference>
<dbReference type="SMART" id="SM01387">
    <property type="entry name" value="Ribosomal_S15"/>
    <property type="match status" value="1"/>
</dbReference>
<dbReference type="SUPFAM" id="SSF47060">
    <property type="entry name" value="S15/NS1 RNA-binding domain"/>
    <property type="match status" value="1"/>
</dbReference>
<dbReference type="PROSITE" id="PS00362">
    <property type="entry name" value="RIBOSOMAL_S15"/>
    <property type="match status" value="1"/>
</dbReference>
<feature type="chain" id="PRO_1000143181" description="Small ribosomal subunit protein uS15">
    <location>
        <begin position="1"/>
        <end position="95"/>
    </location>
</feature>